<sequence length="133" mass="15526">MLSPEAERVLRYLVEVEELAEEVLADKRQIVDLDTKRNQNREGLRALQKDLSLSEDVMVCFGNMFIKMPHPETKEMIEKDQDHLDKEIEKLRKQLKVKVDRLFEAQGKPELKGFNLNPLNQDELKALKIILKG</sequence>
<reference key="1">
    <citation type="submission" date="2004-11" db="EMBL/GenBank/DDBJ databases">
        <authorList>
            <consortium name="The German cDNA consortium"/>
        </authorList>
    </citation>
    <scope>NUCLEOTIDE SEQUENCE [LARGE SCALE MRNA]</scope>
    <source>
        <tissue>Kidney</tissue>
    </source>
</reference>
<gene>
    <name type="primary">PDRG1</name>
</gene>
<proteinExistence type="evidence at transcript level"/>
<evidence type="ECO:0000250" key="1">
    <source>
        <dbReference type="UniProtKB" id="Q9NUG6"/>
    </source>
</evidence>
<evidence type="ECO:0000305" key="2"/>
<keyword id="KW-0143">Chaperone</keyword>
<keyword id="KW-0963">Cytoplasm</keyword>
<keyword id="KW-1185">Reference proteome</keyword>
<name>PDRG1_PONAB</name>
<organism>
    <name type="scientific">Pongo abelii</name>
    <name type="common">Sumatran orangutan</name>
    <name type="synonym">Pongo pygmaeus abelii</name>
    <dbReference type="NCBI Taxonomy" id="9601"/>
    <lineage>
        <taxon>Eukaryota</taxon>
        <taxon>Metazoa</taxon>
        <taxon>Chordata</taxon>
        <taxon>Craniata</taxon>
        <taxon>Vertebrata</taxon>
        <taxon>Euteleostomi</taxon>
        <taxon>Mammalia</taxon>
        <taxon>Eutheria</taxon>
        <taxon>Euarchontoglires</taxon>
        <taxon>Primates</taxon>
        <taxon>Haplorrhini</taxon>
        <taxon>Catarrhini</taxon>
        <taxon>Hominidae</taxon>
        <taxon>Pongo</taxon>
    </lineage>
</organism>
<feature type="chain" id="PRO_0000252490" description="p53 and DNA damage-regulated protein 1">
    <location>
        <begin position="1"/>
        <end position="133"/>
    </location>
</feature>
<protein>
    <recommendedName>
        <fullName>p53 and DNA damage-regulated protein 1</fullName>
    </recommendedName>
</protein>
<dbReference type="EMBL" id="CR857252">
    <property type="protein sequence ID" value="CAH89548.1"/>
    <property type="molecule type" value="mRNA"/>
</dbReference>
<dbReference type="RefSeq" id="NP_001124674.1">
    <property type="nucleotide sequence ID" value="NM_001131202.2"/>
</dbReference>
<dbReference type="SMR" id="Q5RFA9"/>
<dbReference type="FunCoup" id="Q5RFA9">
    <property type="interactions" value="68"/>
</dbReference>
<dbReference type="STRING" id="9601.ENSPPYP00000012173"/>
<dbReference type="GeneID" id="100171520"/>
<dbReference type="KEGG" id="pon:100171520"/>
<dbReference type="CTD" id="81572"/>
<dbReference type="eggNOG" id="ENOG502S6V9">
    <property type="taxonomic scope" value="Eukaryota"/>
</dbReference>
<dbReference type="InParanoid" id="Q5RFA9"/>
<dbReference type="OrthoDB" id="20282at2759"/>
<dbReference type="Proteomes" id="UP000001595">
    <property type="component" value="Unplaced"/>
</dbReference>
<dbReference type="GO" id="GO:0005737">
    <property type="term" value="C:cytoplasm"/>
    <property type="evidence" value="ECO:0007669"/>
    <property type="project" value="UniProtKB-SubCell"/>
</dbReference>
<dbReference type="GO" id="GO:0016272">
    <property type="term" value="C:prefoldin complex"/>
    <property type="evidence" value="ECO:0007669"/>
    <property type="project" value="InterPro"/>
</dbReference>
<dbReference type="GO" id="GO:0051082">
    <property type="term" value="F:unfolded protein binding"/>
    <property type="evidence" value="ECO:0007669"/>
    <property type="project" value="InterPro"/>
</dbReference>
<dbReference type="GO" id="GO:0006457">
    <property type="term" value="P:protein folding"/>
    <property type="evidence" value="ECO:0007669"/>
    <property type="project" value="InterPro"/>
</dbReference>
<dbReference type="CDD" id="cd22860">
    <property type="entry name" value="PDRG1"/>
    <property type="match status" value="1"/>
</dbReference>
<dbReference type="InterPro" id="IPR030482">
    <property type="entry name" value="PDRG1"/>
</dbReference>
<dbReference type="InterPro" id="IPR002777">
    <property type="entry name" value="PFD_beta-like"/>
</dbReference>
<dbReference type="PANTHER" id="PTHR21162">
    <property type="entry name" value="P53 AND DNA DAMAGE-REGULATED PROTEIN"/>
    <property type="match status" value="1"/>
</dbReference>
<dbReference type="PANTHER" id="PTHR21162:SF0">
    <property type="entry name" value="P53 AND DNA DAMAGE-REGULATED PROTEIN 1"/>
    <property type="match status" value="1"/>
</dbReference>
<dbReference type="Pfam" id="PF01920">
    <property type="entry name" value="Prefoldin_2"/>
    <property type="match status" value="1"/>
</dbReference>
<dbReference type="SUPFAM" id="SSF46579">
    <property type="entry name" value="Prefoldin"/>
    <property type="match status" value="1"/>
</dbReference>
<accession>Q5RFA9</accession>
<comment type="function">
    <text evidence="2">May play a role in chaperone-mediated protein folding.</text>
</comment>
<comment type="subunit">
    <text evidence="1">Component of the PAQosome complex which is responsible for the biogenesis of several protein complexes and which consists of R2TP complex members RUVBL1, RUVBL2, RPAP3 and PIH1D1, URI complex members PFDN2, PFDN6, PDRG1, UXT and URI1 as well as ASDURF, POLR2E and DNAAF10/WDR92.</text>
</comment>
<comment type="subcellular location">
    <subcellularLocation>
        <location evidence="2">Cytoplasm</location>
    </subcellularLocation>
</comment>
<comment type="similarity">
    <text evidence="2">Belongs to the prefoldin subunit beta family.</text>
</comment>